<proteinExistence type="inferred from homology"/>
<comment type="function">
    <text evidence="1">Part of the ABC transporter complex ZnuABC involved in zinc import. Responsible for energy coupling to the transport system.</text>
</comment>
<comment type="catalytic activity">
    <reaction evidence="1">
        <text>Zn(2+)(out) + ATP(in) + H2O(in) = Zn(2+)(in) + ADP(in) + phosphate(in) + H(+)(in)</text>
        <dbReference type="Rhea" id="RHEA:29795"/>
        <dbReference type="ChEBI" id="CHEBI:15377"/>
        <dbReference type="ChEBI" id="CHEBI:15378"/>
        <dbReference type="ChEBI" id="CHEBI:29105"/>
        <dbReference type="ChEBI" id="CHEBI:30616"/>
        <dbReference type="ChEBI" id="CHEBI:43474"/>
        <dbReference type="ChEBI" id="CHEBI:456216"/>
        <dbReference type="EC" id="7.2.2.20"/>
    </reaction>
</comment>
<comment type="subunit">
    <text evidence="1">The complex is composed of two ATP-binding proteins (ZnuC), two transmembrane proteins (ZnuB) and a solute-binding protein (ZnuA).</text>
</comment>
<comment type="subcellular location">
    <subcellularLocation>
        <location evidence="1">Cell inner membrane</location>
        <topology evidence="1">Peripheral membrane protein</topology>
    </subcellularLocation>
</comment>
<comment type="similarity">
    <text evidence="1">Belongs to the ABC transporter superfamily. Zinc importer (TC 3.A.1.15.5) family.</text>
</comment>
<comment type="sequence caution" evidence="2">
    <conflict type="erroneous initiation">
        <sequence resource="EMBL-CDS" id="ABD44345"/>
    </conflict>
</comment>
<gene>
    <name evidence="1" type="primary">znuC</name>
    <name type="ordered locus">APH_0983</name>
</gene>
<name>ZNUC_ANAPZ</name>
<sequence length="243" mass="27179">MYSGQHIKEPVTRVAGLQKSVLPMLVVDSITLFYGNRKVIDNVSFSIRPGEIITILGPNGGGKTSLVRVLVGINQDYIGTIHYTKRPIIAYMPQNFKVNSFMPMTVEYLLLSACWGRGISLDLRAVIQYVDISKLLTRQISELSAGEIQLVLLARCMVMKPDLIVLDEPVSCMDVEAKNNFYRLIGKLVSKYNISIIMTSHDLHCVMACSDRVICINRSIRCEGTPEEITESAKFMSVFPENV</sequence>
<protein>
    <recommendedName>
        <fullName evidence="1">Zinc import ATP-binding protein ZnuC</fullName>
        <ecNumber evidence="1">7.2.2.20</ecNumber>
    </recommendedName>
</protein>
<organism>
    <name type="scientific">Anaplasma phagocytophilum (strain HZ)</name>
    <dbReference type="NCBI Taxonomy" id="212042"/>
    <lineage>
        <taxon>Bacteria</taxon>
        <taxon>Pseudomonadati</taxon>
        <taxon>Pseudomonadota</taxon>
        <taxon>Alphaproteobacteria</taxon>
        <taxon>Rickettsiales</taxon>
        <taxon>Anaplasmataceae</taxon>
        <taxon>Anaplasma</taxon>
        <taxon>phagocytophilum group</taxon>
    </lineage>
</organism>
<feature type="chain" id="PRO_0000281494" description="Zinc import ATP-binding protein ZnuC">
    <location>
        <begin position="1"/>
        <end position="243"/>
    </location>
</feature>
<feature type="domain" description="ABC transporter" evidence="1">
    <location>
        <begin position="25"/>
        <end position="242"/>
    </location>
</feature>
<feature type="binding site" evidence="1">
    <location>
        <begin position="57"/>
        <end position="64"/>
    </location>
    <ligand>
        <name>ATP</name>
        <dbReference type="ChEBI" id="CHEBI:30616"/>
    </ligand>
</feature>
<dbReference type="EC" id="7.2.2.20" evidence="1"/>
<dbReference type="EMBL" id="CP000235">
    <property type="protein sequence ID" value="ABD44345.1"/>
    <property type="status" value="ALT_INIT"/>
    <property type="molecule type" value="Genomic_DNA"/>
</dbReference>
<dbReference type="SMR" id="Q2GJA5"/>
<dbReference type="STRING" id="212042.APH_0983"/>
<dbReference type="PaxDb" id="212042-APH_0983"/>
<dbReference type="EnsemblBacteria" id="ABD44345">
    <property type="protein sequence ID" value="ABD44345"/>
    <property type="gene ID" value="APH_0983"/>
</dbReference>
<dbReference type="KEGG" id="aph:APH_0983"/>
<dbReference type="eggNOG" id="COG1121">
    <property type="taxonomic scope" value="Bacteria"/>
</dbReference>
<dbReference type="HOGENOM" id="CLU_000604_1_11_5"/>
<dbReference type="Proteomes" id="UP000001943">
    <property type="component" value="Chromosome"/>
</dbReference>
<dbReference type="GO" id="GO:0005886">
    <property type="term" value="C:plasma membrane"/>
    <property type="evidence" value="ECO:0007669"/>
    <property type="project" value="UniProtKB-SubCell"/>
</dbReference>
<dbReference type="GO" id="GO:0015633">
    <property type="term" value="F:ABC-type zinc transporter activity"/>
    <property type="evidence" value="ECO:0007669"/>
    <property type="project" value="UniProtKB-EC"/>
</dbReference>
<dbReference type="GO" id="GO:0005524">
    <property type="term" value="F:ATP binding"/>
    <property type="evidence" value="ECO:0007669"/>
    <property type="project" value="UniProtKB-KW"/>
</dbReference>
<dbReference type="GO" id="GO:0016887">
    <property type="term" value="F:ATP hydrolysis activity"/>
    <property type="evidence" value="ECO:0007669"/>
    <property type="project" value="InterPro"/>
</dbReference>
<dbReference type="Gene3D" id="3.40.50.300">
    <property type="entry name" value="P-loop containing nucleotide triphosphate hydrolases"/>
    <property type="match status" value="1"/>
</dbReference>
<dbReference type="InterPro" id="IPR003593">
    <property type="entry name" value="AAA+_ATPase"/>
</dbReference>
<dbReference type="InterPro" id="IPR003439">
    <property type="entry name" value="ABC_transporter-like_ATP-bd"/>
</dbReference>
<dbReference type="InterPro" id="IPR017871">
    <property type="entry name" value="ABC_transporter-like_CS"/>
</dbReference>
<dbReference type="InterPro" id="IPR050153">
    <property type="entry name" value="Metal_Ion_Import_ABC"/>
</dbReference>
<dbReference type="InterPro" id="IPR027417">
    <property type="entry name" value="P-loop_NTPase"/>
</dbReference>
<dbReference type="PANTHER" id="PTHR42734">
    <property type="entry name" value="METAL TRANSPORT SYSTEM ATP-BINDING PROTEIN TM_0124-RELATED"/>
    <property type="match status" value="1"/>
</dbReference>
<dbReference type="PANTHER" id="PTHR42734:SF17">
    <property type="entry name" value="METAL TRANSPORT SYSTEM ATP-BINDING PROTEIN TM_0124-RELATED"/>
    <property type="match status" value="1"/>
</dbReference>
<dbReference type="Pfam" id="PF00005">
    <property type="entry name" value="ABC_tran"/>
    <property type="match status" value="1"/>
</dbReference>
<dbReference type="SMART" id="SM00382">
    <property type="entry name" value="AAA"/>
    <property type="match status" value="1"/>
</dbReference>
<dbReference type="SUPFAM" id="SSF52540">
    <property type="entry name" value="P-loop containing nucleoside triphosphate hydrolases"/>
    <property type="match status" value="1"/>
</dbReference>
<dbReference type="PROSITE" id="PS00211">
    <property type="entry name" value="ABC_TRANSPORTER_1"/>
    <property type="match status" value="1"/>
</dbReference>
<dbReference type="PROSITE" id="PS50893">
    <property type="entry name" value="ABC_TRANSPORTER_2"/>
    <property type="match status" value="1"/>
</dbReference>
<dbReference type="PROSITE" id="PS51298">
    <property type="entry name" value="ZNUC"/>
    <property type="match status" value="1"/>
</dbReference>
<accession>Q2GJA5</accession>
<reference key="1">
    <citation type="journal article" date="2006" name="PLoS Genet.">
        <title>Comparative genomics of emerging human ehrlichiosis agents.</title>
        <authorList>
            <person name="Dunning Hotopp J.C."/>
            <person name="Lin M."/>
            <person name="Madupu R."/>
            <person name="Crabtree J."/>
            <person name="Angiuoli S.V."/>
            <person name="Eisen J.A."/>
            <person name="Seshadri R."/>
            <person name="Ren Q."/>
            <person name="Wu M."/>
            <person name="Utterback T.R."/>
            <person name="Smith S."/>
            <person name="Lewis M."/>
            <person name="Khouri H."/>
            <person name="Zhang C."/>
            <person name="Niu H."/>
            <person name="Lin Q."/>
            <person name="Ohashi N."/>
            <person name="Zhi N."/>
            <person name="Nelson W.C."/>
            <person name="Brinkac L.M."/>
            <person name="Dodson R.J."/>
            <person name="Rosovitz M.J."/>
            <person name="Sundaram J.P."/>
            <person name="Daugherty S.C."/>
            <person name="Davidsen T."/>
            <person name="Durkin A.S."/>
            <person name="Gwinn M.L."/>
            <person name="Haft D.H."/>
            <person name="Selengut J.D."/>
            <person name="Sullivan S.A."/>
            <person name="Zafar N."/>
            <person name="Zhou L."/>
            <person name="Benahmed F."/>
            <person name="Forberger H."/>
            <person name="Halpin R."/>
            <person name="Mulligan S."/>
            <person name="Robinson J."/>
            <person name="White O."/>
            <person name="Rikihisa Y."/>
            <person name="Tettelin H."/>
        </authorList>
    </citation>
    <scope>NUCLEOTIDE SEQUENCE [LARGE SCALE GENOMIC DNA]</scope>
    <source>
        <strain>HZ</strain>
    </source>
</reference>
<evidence type="ECO:0000255" key="1">
    <source>
        <dbReference type="HAMAP-Rule" id="MF_01725"/>
    </source>
</evidence>
<evidence type="ECO:0000305" key="2"/>
<keyword id="KW-0067">ATP-binding</keyword>
<keyword id="KW-0997">Cell inner membrane</keyword>
<keyword id="KW-1003">Cell membrane</keyword>
<keyword id="KW-0406">Ion transport</keyword>
<keyword id="KW-0472">Membrane</keyword>
<keyword id="KW-0547">Nucleotide-binding</keyword>
<keyword id="KW-1278">Translocase</keyword>
<keyword id="KW-0813">Transport</keyword>
<keyword id="KW-0862">Zinc</keyword>
<keyword id="KW-0864">Zinc transport</keyword>